<comment type="function">
    <text evidence="1">Plays an important role in the de novo pathway and in the salvage pathway of purine nucleotide biosynthesis. Catalyzes the first committed step in the biosynthesis of AMP from IMP (By similarity).</text>
</comment>
<comment type="catalytic activity">
    <reaction evidence="2">
        <text>IMP + L-aspartate + GTP = N(6)-(1,2-dicarboxyethyl)-AMP + GDP + phosphate + 2 H(+)</text>
        <dbReference type="Rhea" id="RHEA:15753"/>
        <dbReference type="ChEBI" id="CHEBI:15378"/>
        <dbReference type="ChEBI" id="CHEBI:29991"/>
        <dbReference type="ChEBI" id="CHEBI:37565"/>
        <dbReference type="ChEBI" id="CHEBI:43474"/>
        <dbReference type="ChEBI" id="CHEBI:57567"/>
        <dbReference type="ChEBI" id="CHEBI:58053"/>
        <dbReference type="ChEBI" id="CHEBI:58189"/>
        <dbReference type="EC" id="6.3.4.4"/>
    </reaction>
</comment>
<comment type="cofactor">
    <cofactor evidence="2">
        <name>Mg(2+)</name>
        <dbReference type="ChEBI" id="CHEBI:18420"/>
    </cofactor>
    <text evidence="2">Binds 1 Mg(2+) ion per subunit.</text>
</comment>
<comment type="pathway">
    <text evidence="2">Purine metabolism; AMP biosynthesis via de novo pathway; AMP from IMP: step 1/2.</text>
</comment>
<comment type="subunit">
    <text evidence="2">Homodimer.</text>
</comment>
<comment type="subcellular location">
    <subcellularLocation>
        <location evidence="2">Cytoplasm</location>
    </subcellularLocation>
</comment>
<comment type="similarity">
    <text evidence="2">Belongs to the adenylosuccinate synthetase family.</text>
</comment>
<sequence length="429" mass="47643">MADVVLGSQWGDEGKGKLVDILCDQIDVCARCQGGNNAGHTIVVGDVKYDFHMLPSGLVNPNCQNLLGSGVVIHVPSFFDELKAIEDKGLNCRDRLFVSSRCHLVFDFHQLTDGLKEQELSTTKKAIGTTGKGIGPTYSTKASRSGIRVHHLVSQEPGAWEEFESRLRRLVGTRQKRYGDFDYDVEEEIKRYKKLADDLRPFVIDAVPFMHKAIKANKRILIEGANALMLDLDFGTYPYVTSSNTGIGGVCTGLGIPPTAIRNIYGVVKAYTTRVGAGPFPTEQLNNVGEHLQEVGAEFGVTTGRRRRCGWLDLVVLQYSTWINGYTSLNITKLDVLDQLEELKVAVGYKHNGKVLESFPEDLHVLEQVECIYETLPGWKSDTTKITEYAELPENAKKYIAFIEKFLDCPVQWVGVGPGRSHMLSKSVN</sequence>
<keyword id="KW-0963">Cytoplasm</keyword>
<keyword id="KW-0342">GTP-binding</keyword>
<keyword id="KW-0436">Ligase</keyword>
<keyword id="KW-0460">Magnesium</keyword>
<keyword id="KW-0479">Metal-binding</keyword>
<keyword id="KW-0547">Nucleotide-binding</keyword>
<keyword id="KW-0658">Purine biosynthesis</keyword>
<keyword id="KW-1185">Reference proteome</keyword>
<proteinExistence type="inferred from homology"/>
<accession>Q6C482</accession>
<evidence type="ECO:0000250" key="1"/>
<evidence type="ECO:0000255" key="2">
    <source>
        <dbReference type="HAMAP-Rule" id="MF_03125"/>
    </source>
</evidence>
<gene>
    <name type="ordered locus">YALI0E28963g</name>
</gene>
<organism>
    <name type="scientific">Yarrowia lipolytica (strain CLIB 122 / E 150)</name>
    <name type="common">Yeast</name>
    <name type="synonym">Candida lipolytica</name>
    <dbReference type="NCBI Taxonomy" id="284591"/>
    <lineage>
        <taxon>Eukaryota</taxon>
        <taxon>Fungi</taxon>
        <taxon>Dikarya</taxon>
        <taxon>Ascomycota</taxon>
        <taxon>Saccharomycotina</taxon>
        <taxon>Dipodascomycetes</taxon>
        <taxon>Dipodascales</taxon>
        <taxon>Dipodascales incertae sedis</taxon>
        <taxon>Yarrowia</taxon>
    </lineage>
</organism>
<name>PURA_YARLI</name>
<protein>
    <recommendedName>
        <fullName evidence="2">Adenylosuccinate synthetase</fullName>
        <shortName evidence="2">AMPSase</shortName>
        <shortName evidence="2">AdSS</shortName>
        <ecNumber evidence="2">6.3.4.4</ecNumber>
    </recommendedName>
    <alternativeName>
        <fullName evidence="2">IMP--aspartate ligase</fullName>
    </alternativeName>
</protein>
<dbReference type="EC" id="6.3.4.4" evidence="2"/>
<dbReference type="EMBL" id="CR382131">
    <property type="protein sequence ID" value="CAG80133.1"/>
    <property type="molecule type" value="Genomic_DNA"/>
</dbReference>
<dbReference type="RefSeq" id="XP_504530.1">
    <property type="nucleotide sequence ID" value="XM_504530.1"/>
</dbReference>
<dbReference type="SMR" id="Q6C482"/>
<dbReference type="FunCoup" id="Q6C482">
    <property type="interactions" value="819"/>
</dbReference>
<dbReference type="STRING" id="284591.Q6C482"/>
<dbReference type="EnsemblFungi" id="CAG80133">
    <property type="protein sequence ID" value="CAG80133"/>
    <property type="gene ID" value="YALI0_E28963g"/>
</dbReference>
<dbReference type="KEGG" id="yli:2911874"/>
<dbReference type="VEuPathDB" id="FungiDB:YALI0_E28963g"/>
<dbReference type="HOGENOM" id="CLU_029848_3_2_1"/>
<dbReference type="InParanoid" id="Q6C482"/>
<dbReference type="OMA" id="FHHAKPI"/>
<dbReference type="OrthoDB" id="462at4891"/>
<dbReference type="UniPathway" id="UPA00075">
    <property type="reaction ID" value="UER00335"/>
</dbReference>
<dbReference type="Proteomes" id="UP000001300">
    <property type="component" value="Chromosome E"/>
</dbReference>
<dbReference type="GO" id="GO:0005737">
    <property type="term" value="C:cytoplasm"/>
    <property type="evidence" value="ECO:0000318"/>
    <property type="project" value="GO_Central"/>
</dbReference>
<dbReference type="GO" id="GO:0004019">
    <property type="term" value="F:adenylosuccinate synthase activity"/>
    <property type="evidence" value="ECO:0000318"/>
    <property type="project" value="GO_Central"/>
</dbReference>
<dbReference type="GO" id="GO:0005525">
    <property type="term" value="F:GTP binding"/>
    <property type="evidence" value="ECO:0007669"/>
    <property type="project" value="UniProtKB-UniRule"/>
</dbReference>
<dbReference type="GO" id="GO:0000287">
    <property type="term" value="F:magnesium ion binding"/>
    <property type="evidence" value="ECO:0007669"/>
    <property type="project" value="UniProtKB-UniRule"/>
</dbReference>
<dbReference type="GO" id="GO:0044208">
    <property type="term" value="P:'de novo' AMP biosynthetic process"/>
    <property type="evidence" value="ECO:0000318"/>
    <property type="project" value="GO_Central"/>
</dbReference>
<dbReference type="GO" id="GO:0046040">
    <property type="term" value="P:IMP metabolic process"/>
    <property type="evidence" value="ECO:0000318"/>
    <property type="project" value="GO_Central"/>
</dbReference>
<dbReference type="CDD" id="cd03108">
    <property type="entry name" value="AdSS"/>
    <property type="match status" value="1"/>
</dbReference>
<dbReference type="FunFam" id="3.90.170.10:FF:000001">
    <property type="entry name" value="Adenylosuccinate synthetase"/>
    <property type="match status" value="1"/>
</dbReference>
<dbReference type="FunFam" id="1.10.300.10:FF:000002">
    <property type="entry name" value="Adenylosuccinate synthetase, chloroplastic"/>
    <property type="match status" value="1"/>
</dbReference>
<dbReference type="Gene3D" id="3.40.440.10">
    <property type="entry name" value="Adenylosuccinate Synthetase, subunit A, domain 1"/>
    <property type="match status" value="1"/>
</dbReference>
<dbReference type="Gene3D" id="1.10.300.10">
    <property type="entry name" value="Adenylosuccinate Synthetase, subunit A, domain 2"/>
    <property type="match status" value="1"/>
</dbReference>
<dbReference type="Gene3D" id="3.90.170.10">
    <property type="entry name" value="Adenylosuccinate Synthetase, subunit A, domain 3"/>
    <property type="match status" value="1"/>
</dbReference>
<dbReference type="HAMAP" id="MF_00011">
    <property type="entry name" value="Adenylosucc_synth"/>
    <property type="match status" value="1"/>
</dbReference>
<dbReference type="InterPro" id="IPR018220">
    <property type="entry name" value="Adenylosuccin_syn_GTP-bd"/>
</dbReference>
<dbReference type="InterPro" id="IPR033128">
    <property type="entry name" value="Adenylosuccin_syn_Lys_AS"/>
</dbReference>
<dbReference type="InterPro" id="IPR042109">
    <property type="entry name" value="Adenylosuccinate_synth_dom1"/>
</dbReference>
<dbReference type="InterPro" id="IPR042110">
    <property type="entry name" value="Adenylosuccinate_synth_dom2"/>
</dbReference>
<dbReference type="InterPro" id="IPR042111">
    <property type="entry name" value="Adenylosuccinate_synth_dom3"/>
</dbReference>
<dbReference type="InterPro" id="IPR001114">
    <property type="entry name" value="Adenylosuccinate_synthetase"/>
</dbReference>
<dbReference type="InterPro" id="IPR027417">
    <property type="entry name" value="P-loop_NTPase"/>
</dbReference>
<dbReference type="NCBIfam" id="NF002223">
    <property type="entry name" value="PRK01117.1"/>
    <property type="match status" value="1"/>
</dbReference>
<dbReference type="NCBIfam" id="TIGR00184">
    <property type="entry name" value="purA"/>
    <property type="match status" value="1"/>
</dbReference>
<dbReference type="PANTHER" id="PTHR11846">
    <property type="entry name" value="ADENYLOSUCCINATE SYNTHETASE"/>
    <property type="match status" value="1"/>
</dbReference>
<dbReference type="PANTHER" id="PTHR11846:SF0">
    <property type="entry name" value="ADENYLOSUCCINATE SYNTHETASE"/>
    <property type="match status" value="1"/>
</dbReference>
<dbReference type="Pfam" id="PF00709">
    <property type="entry name" value="Adenylsucc_synt"/>
    <property type="match status" value="1"/>
</dbReference>
<dbReference type="SMART" id="SM00788">
    <property type="entry name" value="Adenylsucc_synt"/>
    <property type="match status" value="1"/>
</dbReference>
<dbReference type="SUPFAM" id="SSF52540">
    <property type="entry name" value="P-loop containing nucleoside triphosphate hydrolases"/>
    <property type="match status" value="1"/>
</dbReference>
<dbReference type="PROSITE" id="PS01266">
    <property type="entry name" value="ADENYLOSUCCIN_SYN_1"/>
    <property type="match status" value="1"/>
</dbReference>
<dbReference type="PROSITE" id="PS00513">
    <property type="entry name" value="ADENYLOSUCCIN_SYN_2"/>
    <property type="match status" value="1"/>
</dbReference>
<reference key="1">
    <citation type="journal article" date="2004" name="Nature">
        <title>Genome evolution in yeasts.</title>
        <authorList>
            <person name="Dujon B."/>
            <person name="Sherman D."/>
            <person name="Fischer G."/>
            <person name="Durrens P."/>
            <person name="Casaregola S."/>
            <person name="Lafontaine I."/>
            <person name="de Montigny J."/>
            <person name="Marck C."/>
            <person name="Neuveglise C."/>
            <person name="Talla E."/>
            <person name="Goffard N."/>
            <person name="Frangeul L."/>
            <person name="Aigle M."/>
            <person name="Anthouard V."/>
            <person name="Babour A."/>
            <person name="Barbe V."/>
            <person name="Barnay S."/>
            <person name="Blanchin S."/>
            <person name="Beckerich J.-M."/>
            <person name="Beyne E."/>
            <person name="Bleykasten C."/>
            <person name="Boisrame A."/>
            <person name="Boyer J."/>
            <person name="Cattolico L."/>
            <person name="Confanioleri F."/>
            <person name="de Daruvar A."/>
            <person name="Despons L."/>
            <person name="Fabre E."/>
            <person name="Fairhead C."/>
            <person name="Ferry-Dumazet H."/>
            <person name="Groppi A."/>
            <person name="Hantraye F."/>
            <person name="Hennequin C."/>
            <person name="Jauniaux N."/>
            <person name="Joyet P."/>
            <person name="Kachouri R."/>
            <person name="Kerrest A."/>
            <person name="Koszul R."/>
            <person name="Lemaire M."/>
            <person name="Lesur I."/>
            <person name="Ma L."/>
            <person name="Muller H."/>
            <person name="Nicaud J.-M."/>
            <person name="Nikolski M."/>
            <person name="Oztas S."/>
            <person name="Ozier-Kalogeropoulos O."/>
            <person name="Pellenz S."/>
            <person name="Potier S."/>
            <person name="Richard G.-F."/>
            <person name="Straub M.-L."/>
            <person name="Suleau A."/>
            <person name="Swennen D."/>
            <person name="Tekaia F."/>
            <person name="Wesolowski-Louvel M."/>
            <person name="Westhof E."/>
            <person name="Wirth B."/>
            <person name="Zeniou-Meyer M."/>
            <person name="Zivanovic Y."/>
            <person name="Bolotin-Fukuhara M."/>
            <person name="Thierry A."/>
            <person name="Bouchier C."/>
            <person name="Caudron B."/>
            <person name="Scarpelli C."/>
            <person name="Gaillardin C."/>
            <person name="Weissenbach J."/>
            <person name="Wincker P."/>
            <person name="Souciet J.-L."/>
        </authorList>
    </citation>
    <scope>NUCLEOTIDE SEQUENCE [LARGE SCALE GENOMIC DNA]</scope>
    <source>
        <strain>CLIB 122 / E 150</strain>
    </source>
</reference>
<feature type="chain" id="PRO_0000399370" description="Adenylosuccinate synthetase">
    <location>
        <begin position="1"/>
        <end position="429"/>
    </location>
</feature>
<feature type="active site" description="Proton acceptor" evidence="2">
    <location>
        <position position="12"/>
    </location>
</feature>
<feature type="active site" description="Proton donor" evidence="2">
    <location>
        <position position="40"/>
    </location>
</feature>
<feature type="binding site" evidence="2">
    <location>
        <begin position="11"/>
        <end position="17"/>
    </location>
    <ligand>
        <name>GTP</name>
        <dbReference type="ChEBI" id="CHEBI:37565"/>
    </ligand>
</feature>
<feature type="binding site" description="in other chain" evidence="2">
    <location>
        <begin position="12"/>
        <end position="15"/>
    </location>
    <ligand>
        <name>IMP</name>
        <dbReference type="ChEBI" id="CHEBI:58053"/>
        <note>ligand shared between dimeric partners</note>
    </ligand>
</feature>
<feature type="binding site" evidence="2">
    <location>
        <position position="12"/>
    </location>
    <ligand>
        <name>Mg(2+)</name>
        <dbReference type="ChEBI" id="CHEBI:18420"/>
    </ligand>
</feature>
<feature type="binding site" description="in other chain" evidence="2">
    <location>
        <begin position="37"/>
        <end position="40"/>
    </location>
    <ligand>
        <name>IMP</name>
        <dbReference type="ChEBI" id="CHEBI:58053"/>
        <note>ligand shared between dimeric partners</note>
    </ligand>
</feature>
<feature type="binding site" evidence="2">
    <location>
        <begin position="39"/>
        <end position="41"/>
    </location>
    <ligand>
        <name>GTP</name>
        <dbReference type="ChEBI" id="CHEBI:37565"/>
    </ligand>
</feature>
<feature type="binding site" evidence="2">
    <location>
        <position position="39"/>
    </location>
    <ligand>
        <name>Mg(2+)</name>
        <dbReference type="ChEBI" id="CHEBI:18420"/>
    </ligand>
</feature>
<feature type="binding site" description="in other chain" evidence="2">
    <location>
        <position position="130"/>
    </location>
    <ligand>
        <name>IMP</name>
        <dbReference type="ChEBI" id="CHEBI:58053"/>
        <note>ligand shared between dimeric partners</note>
    </ligand>
</feature>
<feature type="binding site" evidence="2">
    <location>
        <position position="144"/>
    </location>
    <ligand>
        <name>IMP</name>
        <dbReference type="ChEBI" id="CHEBI:58053"/>
        <note>ligand shared between dimeric partners</note>
    </ligand>
</feature>
<feature type="binding site" description="in other chain" evidence="2">
    <location>
        <position position="226"/>
    </location>
    <ligand>
        <name>IMP</name>
        <dbReference type="ChEBI" id="CHEBI:58053"/>
        <note>ligand shared between dimeric partners</note>
    </ligand>
</feature>
<feature type="binding site" description="in other chain" evidence="2">
    <location>
        <position position="241"/>
    </location>
    <ligand>
        <name>IMP</name>
        <dbReference type="ChEBI" id="CHEBI:58053"/>
        <note>ligand shared between dimeric partners</note>
    </ligand>
</feature>
<feature type="binding site" evidence="2">
    <location>
        <begin position="301"/>
        <end position="307"/>
    </location>
    <ligand>
        <name>substrate</name>
    </ligand>
</feature>
<feature type="binding site" description="in other chain" evidence="2">
    <location>
        <position position="305"/>
    </location>
    <ligand>
        <name>IMP</name>
        <dbReference type="ChEBI" id="CHEBI:58053"/>
        <note>ligand shared between dimeric partners</note>
    </ligand>
</feature>
<feature type="binding site" evidence="2">
    <location>
        <position position="307"/>
    </location>
    <ligand>
        <name>GTP</name>
        <dbReference type="ChEBI" id="CHEBI:37565"/>
    </ligand>
</feature>
<feature type="binding site" evidence="2">
    <location>
        <begin position="333"/>
        <end position="335"/>
    </location>
    <ligand>
        <name>GTP</name>
        <dbReference type="ChEBI" id="CHEBI:37565"/>
    </ligand>
</feature>
<feature type="binding site" evidence="2">
    <location>
        <begin position="415"/>
        <end position="417"/>
    </location>
    <ligand>
        <name>GTP</name>
        <dbReference type="ChEBI" id="CHEBI:37565"/>
    </ligand>
</feature>